<dbReference type="EMBL" id="CH954178">
    <property type="protein sequence ID" value="EDV50599.1"/>
    <property type="molecule type" value="Genomic_DNA"/>
</dbReference>
<dbReference type="SMR" id="B3NFQ7"/>
<dbReference type="EnsemblMetazoa" id="FBtr0135097">
    <property type="protein sequence ID" value="FBpp0133589"/>
    <property type="gene ID" value="FBgn0107297"/>
</dbReference>
<dbReference type="EnsemblMetazoa" id="XM_001971537.3">
    <property type="protein sequence ID" value="XP_001971573.1"/>
    <property type="gene ID" value="LOC6544976"/>
</dbReference>
<dbReference type="EnsemblMetazoa" id="XM_026976412.1">
    <property type="protein sequence ID" value="XP_026832213.1"/>
    <property type="gene ID" value="LOC6544976"/>
</dbReference>
<dbReference type="GeneID" id="6544976"/>
<dbReference type="KEGG" id="der:6544976"/>
<dbReference type="CTD" id="39034"/>
<dbReference type="eggNOG" id="KOG3791">
    <property type="taxonomic scope" value="Eukaryota"/>
</dbReference>
<dbReference type="HOGENOM" id="CLU_003304_0_0_1"/>
<dbReference type="OMA" id="HHSQHAQ"/>
<dbReference type="OrthoDB" id="2155283at2759"/>
<dbReference type="PhylomeDB" id="B3NFQ7"/>
<dbReference type="ChiTaRS" id="smg">
    <property type="organism name" value="fly"/>
</dbReference>
<dbReference type="Proteomes" id="UP000008711">
    <property type="component" value="Unassembled WGS sequence"/>
</dbReference>
<dbReference type="GO" id="GO:0005737">
    <property type="term" value="C:cytoplasm"/>
    <property type="evidence" value="ECO:0000250"/>
    <property type="project" value="UniProtKB"/>
</dbReference>
<dbReference type="GO" id="GO:0000932">
    <property type="term" value="C:P-body"/>
    <property type="evidence" value="ECO:0007669"/>
    <property type="project" value="TreeGrafter"/>
</dbReference>
<dbReference type="GO" id="GO:0003729">
    <property type="term" value="F:mRNA binding"/>
    <property type="evidence" value="ECO:0007669"/>
    <property type="project" value="TreeGrafter"/>
</dbReference>
<dbReference type="GO" id="GO:0030371">
    <property type="term" value="F:translation repressor activity"/>
    <property type="evidence" value="ECO:0000250"/>
    <property type="project" value="UniProtKB"/>
</dbReference>
<dbReference type="GO" id="GO:0017148">
    <property type="term" value="P:negative regulation of translation"/>
    <property type="evidence" value="ECO:0000250"/>
    <property type="project" value="UniProtKB"/>
</dbReference>
<dbReference type="GO" id="GO:0000289">
    <property type="term" value="P:nuclear-transcribed mRNA poly(A) tail shortening"/>
    <property type="evidence" value="ECO:0007669"/>
    <property type="project" value="TreeGrafter"/>
</dbReference>
<dbReference type="GO" id="GO:0006355">
    <property type="term" value="P:regulation of DNA-templated transcription"/>
    <property type="evidence" value="ECO:0007669"/>
    <property type="project" value="InterPro"/>
</dbReference>
<dbReference type="CDD" id="cd09557">
    <property type="entry name" value="SAM_Smaug"/>
    <property type="match status" value="1"/>
</dbReference>
<dbReference type="FunFam" id="1.10.150.50:FF:000076">
    <property type="entry name" value="Smg, isoform B"/>
    <property type="match status" value="1"/>
</dbReference>
<dbReference type="FunFam" id="1.25.40.170:FF:000005">
    <property type="entry name" value="Smg, isoform B"/>
    <property type="match status" value="1"/>
</dbReference>
<dbReference type="Gene3D" id="1.25.40.170">
    <property type="entry name" value="Smaug, PHAT domain"/>
    <property type="match status" value="1"/>
</dbReference>
<dbReference type="Gene3D" id="1.10.150.50">
    <property type="entry name" value="Transcription Factor, Ets-1"/>
    <property type="match status" value="1"/>
</dbReference>
<dbReference type="InterPro" id="IPR016024">
    <property type="entry name" value="ARM-type_fold"/>
</dbReference>
<dbReference type="InterPro" id="IPR015327">
    <property type="entry name" value="PHAT_dom"/>
</dbReference>
<dbReference type="InterPro" id="IPR037093">
    <property type="entry name" value="PHAT_dom_sf"/>
</dbReference>
<dbReference type="InterPro" id="IPR001660">
    <property type="entry name" value="SAM"/>
</dbReference>
<dbReference type="InterPro" id="IPR013761">
    <property type="entry name" value="SAM/pointed_sf"/>
</dbReference>
<dbReference type="InterPro" id="IPR050897">
    <property type="entry name" value="SMAUG/VTS1_RNA-bind"/>
</dbReference>
<dbReference type="InterPro" id="IPR037634">
    <property type="entry name" value="Smaug_SAM"/>
</dbReference>
<dbReference type="PANTHER" id="PTHR12515:SF5">
    <property type="entry name" value="PROTEIN SMAUG"/>
    <property type="match status" value="1"/>
</dbReference>
<dbReference type="PANTHER" id="PTHR12515">
    <property type="entry name" value="STERILE ALPHA MOTIF DOMAIN CONTAINING PROTEIN 4-RELATED"/>
    <property type="match status" value="1"/>
</dbReference>
<dbReference type="Pfam" id="PF09246">
    <property type="entry name" value="PHAT"/>
    <property type="match status" value="1"/>
</dbReference>
<dbReference type="Pfam" id="PF00536">
    <property type="entry name" value="SAM_1"/>
    <property type="match status" value="1"/>
</dbReference>
<dbReference type="SMART" id="SM00454">
    <property type="entry name" value="SAM"/>
    <property type="match status" value="1"/>
</dbReference>
<dbReference type="SUPFAM" id="SSF48371">
    <property type="entry name" value="ARM repeat"/>
    <property type="match status" value="1"/>
</dbReference>
<dbReference type="SUPFAM" id="SSF47769">
    <property type="entry name" value="SAM/Pointed domain"/>
    <property type="match status" value="1"/>
</dbReference>
<comment type="function">
    <text evidence="1">Translation regulator that binds to the 3'-UTR of specific mRNAs such as nanos (nos) and prevent their translation. Prevents translation of unlocalized nos in the bulk cytoplasm via the recruitment of cup (By similarity).</text>
</comment>
<comment type="subunit">
    <text evidence="1">Interacts with oskar (osk). Binds to the 3'-UTR of nos. Interacts with cup, which in turn recruits eIF4-E, leading to an indirect interaction between smg and eIF4-E that prevents mRNA translation (By similarity).</text>
</comment>
<comment type="subcellular location">
    <subcellularLocation>
        <location evidence="1">Cytoplasm</location>
    </subcellularLocation>
</comment>
<comment type="domain">
    <text evidence="1">The SAM domain mediates the association with the 3'-UTR of specific mRNAs.</text>
</comment>
<comment type="similarity">
    <text evidence="2">Belongs to the SMAUG family.</text>
</comment>
<sequence length="997" mass="108762">MKYATGTDNAMTSGISGQTNNSNSASTEMQPTTSTPTAVHKEATPTATTTATYANGNPNPNANPSQSQPSNALFCEQVTTVTNLFEKWNDCERTVVMYALLKRLRYPSLKFLQYSIDSNLTQNLGTSQTNLSSVVIDINANNPVYLQNLLNAYKTFQPCDLLDAMSSSSSDKDSMPCYGSDFQITTSAQCDERKLYARKEDILHEVLNMLPLLKPGNEEAKLIYLTLIPVAVKDTMQQIVPTELVQQIFSYLLIHPAITSEDRRALNIWLRHLEDHIQAAAAGLTNRSYFLQPSPQLVAGGSSTGSGSCSSSATSSSTASCSSVASSSLCPASGSRSSRTNDWQTIAPPSKQLQNKLAGDWRGSGGGSSSGSINPLCDNLNGITLNELASSQNSLGLSLEGSSSLVNGVVAGAGSMLGIGGGDDHDTSFSKNGTEILDFDPVTADMGEACSLASSSLCGRNGGNPVEDRSQPPPNLQQQMLQPPPYASILMGNVGDQFGEINRWSLDSKIAALKTRRSNSLTTQTISSCSSSSNSSVITVNDNCSNSTENLAQFANKPRSFSLSIEHQRGALINSGSDTRLDEFKPNYIKFHTRNVGMSGIGLWLKSLRLHKYIELFKNMTYEEMLLITEDFLQSVGVTKGASHKLALCIEKLKERANILNRVEQELLTGQMELSTAVEELTNIVLTPMKPLESPGPPEENIGLRFLKVIDIVTNTLQQDPYAAQDDETLGVLMWILDRSIHNEAFMNHASQLKDLKFKLSKMKISMVPKMHHVKPAGVGPNNGNINKPRWNGKTRKCDPKNGSNDRINNRKNSNDMLNFSLNCLPHPLPHHSQQPPPPLPQFDYNGYGGGPSHQPQYKSSSYPSFMGNPQQQPPPPPPTKSHHHAQQMQQMLQQHNHFPALPQQTPPQSHRRSLNNLILVAGGPQQPQQLIFKPGQGVLTNNGSSDNLGLERNQQPQQQQRKLSGGVTSAEQQPKKTMAAVVMENLAKFDQHFTLF</sequence>
<proteinExistence type="inferred from homology"/>
<evidence type="ECO:0000250" key="1">
    <source>
        <dbReference type="UniProtKB" id="Q23972"/>
    </source>
</evidence>
<evidence type="ECO:0000255" key="2"/>
<evidence type="ECO:0000256" key="3">
    <source>
        <dbReference type="SAM" id="MobiDB-lite"/>
    </source>
</evidence>
<evidence type="ECO:0000312" key="4">
    <source>
        <dbReference type="EMBL" id="EDV50599.1"/>
    </source>
</evidence>
<accession>B3NFQ7</accession>
<organism>
    <name type="scientific">Drosophila erecta</name>
    <name type="common">Fruit fly</name>
    <dbReference type="NCBI Taxonomy" id="7220"/>
    <lineage>
        <taxon>Eukaryota</taxon>
        <taxon>Metazoa</taxon>
        <taxon>Ecdysozoa</taxon>
        <taxon>Arthropoda</taxon>
        <taxon>Hexapoda</taxon>
        <taxon>Insecta</taxon>
        <taxon>Pterygota</taxon>
        <taxon>Neoptera</taxon>
        <taxon>Endopterygota</taxon>
        <taxon>Diptera</taxon>
        <taxon>Brachycera</taxon>
        <taxon>Muscomorpha</taxon>
        <taxon>Ephydroidea</taxon>
        <taxon>Drosophilidae</taxon>
        <taxon>Drosophila</taxon>
        <taxon>Sophophora</taxon>
    </lineage>
</organism>
<name>SMG_DROER</name>
<feature type="chain" id="PRO_0000395316" description="Protein Smaug">
    <location>
        <begin position="1"/>
        <end position="997"/>
    </location>
</feature>
<feature type="domain" description="SAM" evidence="2">
    <location>
        <begin position="600"/>
        <end position="654"/>
    </location>
</feature>
<feature type="region of interest" description="Disordered" evidence="3">
    <location>
        <begin position="1"/>
        <end position="69"/>
    </location>
</feature>
<feature type="region of interest" description="Disordered" evidence="3">
    <location>
        <begin position="329"/>
        <end position="370"/>
    </location>
</feature>
<feature type="region of interest" description="Interaction with cup" evidence="1">
    <location>
        <begin position="583"/>
        <end position="763"/>
    </location>
</feature>
<feature type="region of interest" description="Disordered" evidence="3">
    <location>
        <begin position="773"/>
        <end position="892"/>
    </location>
</feature>
<feature type="region of interest" description="Disordered" evidence="3">
    <location>
        <begin position="944"/>
        <end position="972"/>
    </location>
</feature>
<feature type="compositionally biased region" description="Polar residues" evidence="3">
    <location>
        <begin position="1"/>
        <end position="37"/>
    </location>
</feature>
<feature type="compositionally biased region" description="Low complexity" evidence="3">
    <location>
        <begin position="44"/>
        <end position="69"/>
    </location>
</feature>
<feature type="compositionally biased region" description="Low complexity" evidence="3">
    <location>
        <begin position="329"/>
        <end position="338"/>
    </location>
</feature>
<feature type="compositionally biased region" description="Polar residues" evidence="3">
    <location>
        <begin position="802"/>
        <end position="822"/>
    </location>
</feature>
<feature type="compositionally biased region" description="Polar residues" evidence="3">
    <location>
        <begin position="854"/>
        <end position="864"/>
    </location>
</feature>
<feature type="modified residue" description="Phosphoserine" evidence="1">
    <location>
        <position position="564"/>
    </location>
</feature>
<feature type="modified residue" description="Phosphoserine" evidence="1">
    <location>
        <position position="575"/>
    </location>
</feature>
<feature type="modified residue" description="Phosphoserine" evidence="1">
    <location>
        <position position="970"/>
    </location>
</feature>
<keyword id="KW-0963">Cytoplasm</keyword>
<keyword id="KW-0217">Developmental protein</keyword>
<keyword id="KW-0597">Phosphoprotein</keyword>
<keyword id="KW-0678">Repressor</keyword>
<keyword id="KW-0694">RNA-binding</keyword>
<keyword id="KW-0810">Translation regulation</keyword>
<protein>
    <recommendedName>
        <fullName evidence="1">Protein Smaug</fullName>
    </recommendedName>
</protein>
<gene>
    <name evidence="1" type="primary">smg</name>
    <name type="ORF">GG15043</name>
</gene>
<reference evidence="4" key="1">
    <citation type="journal article" date="2007" name="Nature">
        <title>Evolution of genes and genomes on the Drosophila phylogeny.</title>
        <authorList>
            <consortium name="Drosophila 12 genomes consortium"/>
        </authorList>
    </citation>
    <scope>NUCLEOTIDE SEQUENCE [LARGE SCALE GENOMIC DNA]</scope>
    <source>
        <strain evidence="4">Tucson 14021-0224.01</strain>
    </source>
</reference>